<gene>
    <name evidence="1" type="primary">leuB</name>
    <name type="ordered locus">plu3674</name>
</gene>
<sequence>MSNNYHIAVLPGDGIGPEVMAQAYKILDAIRKRFNICITTSEYDVGGIAIDRHGCSLPAKTVAGCEQADAILFGSVGGPKWEHLPPAEQPERGALLPLRKHFKLFSNLRPARLYAGLEVFCPLRNDIAAKGFDILCVRELTGGIYFGQPKGREGQGKYERAFDTEVYHRFEIERIARIAFESARKRSNKVTSIDKANVLQSSVLWREVVTEIAKAYPDVEINHMYIDNATMQLIKDPSQFDVMLCSNIFGDILSDECAMITGSMGMLPSASLNEKGFGLYEPAGGSAPDIAGKGIANPIAQILSAALLLRYSLGHNDAANAIEQAVNYALEQGYRTTDLAGNGKAISTDEMGSTIARYIAEGV</sequence>
<proteinExistence type="inferred from homology"/>
<reference key="1">
    <citation type="journal article" date="2003" name="Nat. Biotechnol.">
        <title>The genome sequence of the entomopathogenic bacterium Photorhabdus luminescens.</title>
        <authorList>
            <person name="Duchaud E."/>
            <person name="Rusniok C."/>
            <person name="Frangeul L."/>
            <person name="Buchrieser C."/>
            <person name="Givaudan A."/>
            <person name="Taourit S."/>
            <person name="Bocs S."/>
            <person name="Boursaux-Eude C."/>
            <person name="Chandler M."/>
            <person name="Charles J.-F."/>
            <person name="Dassa E."/>
            <person name="Derose R."/>
            <person name="Derzelle S."/>
            <person name="Freyssinet G."/>
            <person name="Gaudriault S."/>
            <person name="Medigue C."/>
            <person name="Lanois A."/>
            <person name="Powell K."/>
            <person name="Siguier P."/>
            <person name="Vincent R."/>
            <person name="Wingate V."/>
            <person name="Zouine M."/>
            <person name="Glaser P."/>
            <person name="Boemare N."/>
            <person name="Danchin A."/>
            <person name="Kunst F."/>
        </authorList>
    </citation>
    <scope>NUCLEOTIDE SEQUENCE [LARGE SCALE GENOMIC DNA]</scope>
    <source>
        <strain>DSM 15139 / CIP 105565 / TT01</strain>
    </source>
</reference>
<accession>Q7N128</accession>
<comment type="function">
    <text evidence="1">Catalyzes the oxidation of 3-carboxy-2-hydroxy-4-methylpentanoate (3-isopropylmalate) to 3-carboxy-4-methyl-2-oxopentanoate. The product decarboxylates to 4-methyl-2 oxopentanoate.</text>
</comment>
<comment type="catalytic activity">
    <reaction evidence="1">
        <text>(2R,3S)-3-isopropylmalate + NAD(+) = 4-methyl-2-oxopentanoate + CO2 + NADH</text>
        <dbReference type="Rhea" id="RHEA:32271"/>
        <dbReference type="ChEBI" id="CHEBI:16526"/>
        <dbReference type="ChEBI" id="CHEBI:17865"/>
        <dbReference type="ChEBI" id="CHEBI:35121"/>
        <dbReference type="ChEBI" id="CHEBI:57540"/>
        <dbReference type="ChEBI" id="CHEBI:57945"/>
        <dbReference type="EC" id="1.1.1.85"/>
    </reaction>
</comment>
<comment type="cofactor">
    <cofactor evidence="1">
        <name>Mg(2+)</name>
        <dbReference type="ChEBI" id="CHEBI:18420"/>
    </cofactor>
    <cofactor evidence="1">
        <name>Mn(2+)</name>
        <dbReference type="ChEBI" id="CHEBI:29035"/>
    </cofactor>
    <text evidence="1">Binds 1 Mg(2+) or Mn(2+) ion per subunit.</text>
</comment>
<comment type="pathway">
    <text evidence="1">Amino-acid biosynthesis; L-leucine biosynthesis; L-leucine from 3-methyl-2-oxobutanoate: step 3/4.</text>
</comment>
<comment type="subunit">
    <text evidence="1">Homodimer.</text>
</comment>
<comment type="subcellular location">
    <subcellularLocation>
        <location evidence="1">Cytoplasm</location>
    </subcellularLocation>
</comment>
<comment type="similarity">
    <text evidence="1">Belongs to the isocitrate and isopropylmalate dehydrogenases family. LeuB type 1 subfamily.</text>
</comment>
<feature type="chain" id="PRO_0000083721" description="3-isopropylmalate dehydrogenase">
    <location>
        <begin position="1"/>
        <end position="363"/>
    </location>
</feature>
<feature type="binding site" evidence="1">
    <location>
        <begin position="78"/>
        <end position="91"/>
    </location>
    <ligand>
        <name>NAD(+)</name>
        <dbReference type="ChEBI" id="CHEBI:57540"/>
    </ligand>
</feature>
<feature type="binding site" evidence="1">
    <location>
        <position position="99"/>
    </location>
    <ligand>
        <name>substrate</name>
    </ligand>
</feature>
<feature type="binding site" evidence="1">
    <location>
        <position position="109"/>
    </location>
    <ligand>
        <name>substrate</name>
    </ligand>
</feature>
<feature type="binding site" evidence="1">
    <location>
        <position position="138"/>
    </location>
    <ligand>
        <name>substrate</name>
    </ligand>
</feature>
<feature type="binding site" evidence="1">
    <location>
        <position position="227"/>
    </location>
    <ligand>
        <name>Mg(2+)</name>
        <dbReference type="ChEBI" id="CHEBI:18420"/>
    </ligand>
</feature>
<feature type="binding site" evidence="1">
    <location>
        <position position="227"/>
    </location>
    <ligand>
        <name>substrate</name>
    </ligand>
</feature>
<feature type="binding site" evidence="1">
    <location>
        <position position="251"/>
    </location>
    <ligand>
        <name>Mg(2+)</name>
        <dbReference type="ChEBI" id="CHEBI:18420"/>
    </ligand>
</feature>
<feature type="binding site" evidence="1">
    <location>
        <position position="255"/>
    </location>
    <ligand>
        <name>Mg(2+)</name>
        <dbReference type="ChEBI" id="CHEBI:18420"/>
    </ligand>
</feature>
<feature type="binding site" evidence="1">
    <location>
        <begin position="285"/>
        <end position="297"/>
    </location>
    <ligand>
        <name>NAD(+)</name>
        <dbReference type="ChEBI" id="CHEBI:57540"/>
    </ligand>
</feature>
<feature type="site" description="Important for catalysis" evidence="1">
    <location>
        <position position="145"/>
    </location>
</feature>
<feature type="site" description="Important for catalysis" evidence="1">
    <location>
        <position position="195"/>
    </location>
</feature>
<organism>
    <name type="scientific">Photorhabdus laumondii subsp. laumondii (strain DSM 15139 / CIP 105565 / TT01)</name>
    <name type="common">Photorhabdus luminescens subsp. laumondii</name>
    <dbReference type="NCBI Taxonomy" id="243265"/>
    <lineage>
        <taxon>Bacteria</taxon>
        <taxon>Pseudomonadati</taxon>
        <taxon>Pseudomonadota</taxon>
        <taxon>Gammaproteobacteria</taxon>
        <taxon>Enterobacterales</taxon>
        <taxon>Morganellaceae</taxon>
        <taxon>Photorhabdus</taxon>
    </lineage>
</organism>
<evidence type="ECO:0000255" key="1">
    <source>
        <dbReference type="HAMAP-Rule" id="MF_01033"/>
    </source>
</evidence>
<protein>
    <recommendedName>
        <fullName evidence="1">3-isopropylmalate dehydrogenase</fullName>
        <ecNumber evidence="1">1.1.1.85</ecNumber>
    </recommendedName>
    <alternativeName>
        <fullName evidence="1">3-IPM-DH</fullName>
    </alternativeName>
    <alternativeName>
        <fullName evidence="1">Beta-IPM dehydrogenase</fullName>
        <shortName evidence="1">IMDH</shortName>
    </alternativeName>
</protein>
<name>LEU3_PHOLL</name>
<dbReference type="EC" id="1.1.1.85" evidence="1"/>
<dbReference type="EMBL" id="BX571871">
    <property type="protein sequence ID" value="CAE16047.1"/>
    <property type="molecule type" value="Genomic_DNA"/>
</dbReference>
<dbReference type="RefSeq" id="WP_011147837.1">
    <property type="nucleotide sequence ID" value="NC_005126.1"/>
</dbReference>
<dbReference type="SMR" id="Q7N128"/>
<dbReference type="STRING" id="243265.plu3674"/>
<dbReference type="GeneID" id="48849917"/>
<dbReference type="KEGG" id="plu:plu3674"/>
<dbReference type="eggNOG" id="COG0473">
    <property type="taxonomic scope" value="Bacteria"/>
</dbReference>
<dbReference type="HOGENOM" id="CLU_031953_0_3_6"/>
<dbReference type="OrthoDB" id="9767905at2"/>
<dbReference type="UniPathway" id="UPA00048">
    <property type="reaction ID" value="UER00072"/>
</dbReference>
<dbReference type="Proteomes" id="UP000002514">
    <property type="component" value="Chromosome"/>
</dbReference>
<dbReference type="GO" id="GO:0005829">
    <property type="term" value="C:cytosol"/>
    <property type="evidence" value="ECO:0007669"/>
    <property type="project" value="TreeGrafter"/>
</dbReference>
<dbReference type="GO" id="GO:0003862">
    <property type="term" value="F:3-isopropylmalate dehydrogenase activity"/>
    <property type="evidence" value="ECO:0007669"/>
    <property type="project" value="UniProtKB-UniRule"/>
</dbReference>
<dbReference type="GO" id="GO:0000287">
    <property type="term" value="F:magnesium ion binding"/>
    <property type="evidence" value="ECO:0007669"/>
    <property type="project" value="InterPro"/>
</dbReference>
<dbReference type="GO" id="GO:0051287">
    <property type="term" value="F:NAD binding"/>
    <property type="evidence" value="ECO:0007669"/>
    <property type="project" value="InterPro"/>
</dbReference>
<dbReference type="GO" id="GO:0009098">
    <property type="term" value="P:L-leucine biosynthetic process"/>
    <property type="evidence" value="ECO:0007669"/>
    <property type="project" value="UniProtKB-UniRule"/>
</dbReference>
<dbReference type="FunFam" id="3.40.718.10:FF:000004">
    <property type="entry name" value="3-isopropylmalate dehydrogenase"/>
    <property type="match status" value="1"/>
</dbReference>
<dbReference type="Gene3D" id="3.40.718.10">
    <property type="entry name" value="Isopropylmalate Dehydrogenase"/>
    <property type="match status" value="1"/>
</dbReference>
<dbReference type="HAMAP" id="MF_01033">
    <property type="entry name" value="LeuB_type1"/>
    <property type="match status" value="1"/>
</dbReference>
<dbReference type="InterPro" id="IPR019818">
    <property type="entry name" value="IsoCit/isopropylmalate_DH_CS"/>
</dbReference>
<dbReference type="InterPro" id="IPR024084">
    <property type="entry name" value="IsoPropMal-DH-like_dom"/>
</dbReference>
<dbReference type="InterPro" id="IPR004429">
    <property type="entry name" value="Isopropylmalate_DH"/>
</dbReference>
<dbReference type="NCBIfam" id="TIGR00169">
    <property type="entry name" value="leuB"/>
    <property type="match status" value="1"/>
</dbReference>
<dbReference type="PANTHER" id="PTHR42979">
    <property type="entry name" value="3-ISOPROPYLMALATE DEHYDROGENASE"/>
    <property type="match status" value="1"/>
</dbReference>
<dbReference type="PANTHER" id="PTHR42979:SF1">
    <property type="entry name" value="3-ISOPROPYLMALATE DEHYDROGENASE"/>
    <property type="match status" value="1"/>
</dbReference>
<dbReference type="Pfam" id="PF00180">
    <property type="entry name" value="Iso_dh"/>
    <property type="match status" value="1"/>
</dbReference>
<dbReference type="SMART" id="SM01329">
    <property type="entry name" value="Iso_dh"/>
    <property type="match status" value="1"/>
</dbReference>
<dbReference type="SUPFAM" id="SSF53659">
    <property type="entry name" value="Isocitrate/Isopropylmalate dehydrogenase-like"/>
    <property type="match status" value="1"/>
</dbReference>
<dbReference type="PROSITE" id="PS00470">
    <property type="entry name" value="IDH_IMDH"/>
    <property type="match status" value="1"/>
</dbReference>
<keyword id="KW-0028">Amino-acid biosynthesis</keyword>
<keyword id="KW-0100">Branched-chain amino acid biosynthesis</keyword>
<keyword id="KW-0963">Cytoplasm</keyword>
<keyword id="KW-0432">Leucine biosynthesis</keyword>
<keyword id="KW-0460">Magnesium</keyword>
<keyword id="KW-0464">Manganese</keyword>
<keyword id="KW-0479">Metal-binding</keyword>
<keyword id="KW-0520">NAD</keyword>
<keyword id="KW-0560">Oxidoreductase</keyword>
<keyword id="KW-1185">Reference proteome</keyword>